<gene>
    <name evidence="1" type="primary">glmM</name>
    <name type="ordered locus">BBR47_02690</name>
</gene>
<comment type="function">
    <text evidence="1">Catalyzes the conversion of glucosamine-6-phosphate to glucosamine-1-phosphate.</text>
</comment>
<comment type="catalytic activity">
    <reaction evidence="1">
        <text>alpha-D-glucosamine 1-phosphate = D-glucosamine 6-phosphate</text>
        <dbReference type="Rhea" id="RHEA:23424"/>
        <dbReference type="ChEBI" id="CHEBI:58516"/>
        <dbReference type="ChEBI" id="CHEBI:58725"/>
        <dbReference type="EC" id="5.4.2.10"/>
    </reaction>
</comment>
<comment type="cofactor">
    <cofactor evidence="1">
        <name>Mg(2+)</name>
        <dbReference type="ChEBI" id="CHEBI:18420"/>
    </cofactor>
    <text evidence="1">Binds 1 Mg(2+) ion per subunit.</text>
</comment>
<comment type="PTM">
    <text evidence="1">Activated by phosphorylation.</text>
</comment>
<comment type="similarity">
    <text evidence="1">Belongs to the phosphohexose mutase family.</text>
</comment>
<proteinExistence type="inferred from homology"/>
<dbReference type="EC" id="5.4.2.10" evidence="1"/>
<dbReference type="EMBL" id="AP008955">
    <property type="protein sequence ID" value="BAH41246.1"/>
    <property type="molecule type" value="Genomic_DNA"/>
</dbReference>
<dbReference type="RefSeq" id="WP_012684019.1">
    <property type="nucleotide sequence ID" value="NC_012491.1"/>
</dbReference>
<dbReference type="SMR" id="C0ZIM8"/>
<dbReference type="STRING" id="358681.BBR47_02690"/>
<dbReference type="KEGG" id="bbe:BBR47_02690"/>
<dbReference type="eggNOG" id="COG1109">
    <property type="taxonomic scope" value="Bacteria"/>
</dbReference>
<dbReference type="HOGENOM" id="CLU_016950_7_0_9"/>
<dbReference type="Proteomes" id="UP000001877">
    <property type="component" value="Chromosome"/>
</dbReference>
<dbReference type="GO" id="GO:0005829">
    <property type="term" value="C:cytosol"/>
    <property type="evidence" value="ECO:0007669"/>
    <property type="project" value="TreeGrafter"/>
</dbReference>
<dbReference type="GO" id="GO:0000287">
    <property type="term" value="F:magnesium ion binding"/>
    <property type="evidence" value="ECO:0007669"/>
    <property type="project" value="UniProtKB-UniRule"/>
</dbReference>
<dbReference type="GO" id="GO:0008966">
    <property type="term" value="F:phosphoglucosamine mutase activity"/>
    <property type="evidence" value="ECO:0007669"/>
    <property type="project" value="UniProtKB-UniRule"/>
</dbReference>
<dbReference type="GO" id="GO:0004615">
    <property type="term" value="F:phosphomannomutase activity"/>
    <property type="evidence" value="ECO:0007669"/>
    <property type="project" value="TreeGrafter"/>
</dbReference>
<dbReference type="GO" id="GO:0005975">
    <property type="term" value="P:carbohydrate metabolic process"/>
    <property type="evidence" value="ECO:0007669"/>
    <property type="project" value="InterPro"/>
</dbReference>
<dbReference type="GO" id="GO:0009252">
    <property type="term" value="P:peptidoglycan biosynthetic process"/>
    <property type="evidence" value="ECO:0007669"/>
    <property type="project" value="TreeGrafter"/>
</dbReference>
<dbReference type="GO" id="GO:0006048">
    <property type="term" value="P:UDP-N-acetylglucosamine biosynthetic process"/>
    <property type="evidence" value="ECO:0007669"/>
    <property type="project" value="TreeGrafter"/>
</dbReference>
<dbReference type="CDD" id="cd05802">
    <property type="entry name" value="GlmM"/>
    <property type="match status" value="1"/>
</dbReference>
<dbReference type="FunFam" id="3.30.310.50:FF:000001">
    <property type="entry name" value="Phosphoglucosamine mutase"/>
    <property type="match status" value="1"/>
</dbReference>
<dbReference type="FunFam" id="3.40.120.10:FF:000001">
    <property type="entry name" value="Phosphoglucosamine mutase"/>
    <property type="match status" value="1"/>
</dbReference>
<dbReference type="FunFam" id="3.40.120.10:FF:000002">
    <property type="entry name" value="Phosphoglucosamine mutase"/>
    <property type="match status" value="1"/>
</dbReference>
<dbReference type="Gene3D" id="3.40.120.10">
    <property type="entry name" value="Alpha-D-Glucose-1,6-Bisphosphate, subunit A, domain 3"/>
    <property type="match status" value="3"/>
</dbReference>
<dbReference type="Gene3D" id="3.30.310.50">
    <property type="entry name" value="Alpha-D-phosphohexomutase, C-terminal domain"/>
    <property type="match status" value="1"/>
</dbReference>
<dbReference type="HAMAP" id="MF_01554_B">
    <property type="entry name" value="GlmM_B"/>
    <property type="match status" value="1"/>
</dbReference>
<dbReference type="InterPro" id="IPR005844">
    <property type="entry name" value="A-D-PHexomutase_a/b/a-I"/>
</dbReference>
<dbReference type="InterPro" id="IPR016055">
    <property type="entry name" value="A-D-PHexomutase_a/b/a-I/II/III"/>
</dbReference>
<dbReference type="InterPro" id="IPR005845">
    <property type="entry name" value="A-D-PHexomutase_a/b/a-II"/>
</dbReference>
<dbReference type="InterPro" id="IPR005846">
    <property type="entry name" value="A-D-PHexomutase_a/b/a-III"/>
</dbReference>
<dbReference type="InterPro" id="IPR005843">
    <property type="entry name" value="A-D-PHexomutase_C"/>
</dbReference>
<dbReference type="InterPro" id="IPR036900">
    <property type="entry name" value="A-D-PHexomutase_C_sf"/>
</dbReference>
<dbReference type="InterPro" id="IPR016066">
    <property type="entry name" value="A-D-PHexomutase_CS"/>
</dbReference>
<dbReference type="InterPro" id="IPR005841">
    <property type="entry name" value="Alpha-D-phosphohexomutase_SF"/>
</dbReference>
<dbReference type="InterPro" id="IPR006352">
    <property type="entry name" value="GlmM_bact"/>
</dbReference>
<dbReference type="InterPro" id="IPR050060">
    <property type="entry name" value="Phosphoglucosamine_mutase"/>
</dbReference>
<dbReference type="NCBIfam" id="TIGR01455">
    <property type="entry name" value="glmM"/>
    <property type="match status" value="1"/>
</dbReference>
<dbReference type="NCBIfam" id="NF008139">
    <property type="entry name" value="PRK10887.1"/>
    <property type="match status" value="1"/>
</dbReference>
<dbReference type="PANTHER" id="PTHR42946:SF1">
    <property type="entry name" value="PHOSPHOGLUCOMUTASE (ALPHA-D-GLUCOSE-1,6-BISPHOSPHATE-DEPENDENT)"/>
    <property type="match status" value="1"/>
</dbReference>
<dbReference type="PANTHER" id="PTHR42946">
    <property type="entry name" value="PHOSPHOHEXOSE MUTASE"/>
    <property type="match status" value="1"/>
</dbReference>
<dbReference type="Pfam" id="PF02878">
    <property type="entry name" value="PGM_PMM_I"/>
    <property type="match status" value="1"/>
</dbReference>
<dbReference type="Pfam" id="PF02879">
    <property type="entry name" value="PGM_PMM_II"/>
    <property type="match status" value="1"/>
</dbReference>
<dbReference type="Pfam" id="PF02880">
    <property type="entry name" value="PGM_PMM_III"/>
    <property type="match status" value="1"/>
</dbReference>
<dbReference type="Pfam" id="PF00408">
    <property type="entry name" value="PGM_PMM_IV"/>
    <property type="match status" value="1"/>
</dbReference>
<dbReference type="PRINTS" id="PR00509">
    <property type="entry name" value="PGMPMM"/>
</dbReference>
<dbReference type="SUPFAM" id="SSF55957">
    <property type="entry name" value="Phosphoglucomutase, C-terminal domain"/>
    <property type="match status" value="1"/>
</dbReference>
<dbReference type="SUPFAM" id="SSF53738">
    <property type="entry name" value="Phosphoglucomutase, first 3 domains"/>
    <property type="match status" value="3"/>
</dbReference>
<dbReference type="PROSITE" id="PS00710">
    <property type="entry name" value="PGM_PMM"/>
    <property type="match status" value="1"/>
</dbReference>
<evidence type="ECO:0000255" key="1">
    <source>
        <dbReference type="HAMAP-Rule" id="MF_01554"/>
    </source>
</evidence>
<keyword id="KW-0413">Isomerase</keyword>
<keyword id="KW-0460">Magnesium</keyword>
<keyword id="KW-0479">Metal-binding</keyword>
<keyword id="KW-0597">Phosphoprotein</keyword>
<keyword id="KW-1185">Reference proteome</keyword>
<name>GLMM_BREBN</name>
<protein>
    <recommendedName>
        <fullName evidence="1">Phosphoglucosamine mutase</fullName>
        <ecNumber evidence="1">5.4.2.10</ecNumber>
    </recommendedName>
</protein>
<sequence>MGKYFGTDGVRGVANTQLTPELAFKIGRVGGYVLTRHKQEGKPKVVIGRDTRISGQMLENALLAGLLSVGAEVVRLGVISTSGVAYLTRALGADAGVMISASHNPFPDNGIKFFGSNGFKLSDEVEAEVEQYLDAAEDTMPRPTGEQIGTVLEFLEGGQKYLSHLKSTVSERFDGLKVVLDCANGAVSSLAARLFADVDAEVITIGANPNGININDQCGSTHPERLVEEVLKHKADLGLSFDGDADRCIAVDNNGEIIDGDYIMAICARALKAKGKLNNNTVVTTVMANMGFFKGMEECSINTTKTAVGDRYVVEEMLRGGYNLGGEQSGHIVFLDYNTTGDGLLTGLQLLNIIKESGKPLSELKQVMVKYPQLLINVRVEDKSKLNGNEAIAQAIREVEEDLAGNGRVLVRPSGTEPIVRVMAEGPDAAQLEGLVNRIVDVVKQQLV</sequence>
<feature type="chain" id="PRO_1000185354" description="Phosphoglucosamine mutase">
    <location>
        <begin position="1"/>
        <end position="448"/>
    </location>
</feature>
<feature type="active site" description="Phosphoserine intermediate" evidence="1">
    <location>
        <position position="102"/>
    </location>
</feature>
<feature type="binding site" description="via phosphate group" evidence="1">
    <location>
        <position position="102"/>
    </location>
    <ligand>
        <name>Mg(2+)</name>
        <dbReference type="ChEBI" id="CHEBI:18420"/>
    </ligand>
</feature>
<feature type="binding site" evidence="1">
    <location>
        <position position="242"/>
    </location>
    <ligand>
        <name>Mg(2+)</name>
        <dbReference type="ChEBI" id="CHEBI:18420"/>
    </ligand>
</feature>
<feature type="binding site" evidence="1">
    <location>
        <position position="244"/>
    </location>
    <ligand>
        <name>Mg(2+)</name>
        <dbReference type="ChEBI" id="CHEBI:18420"/>
    </ligand>
</feature>
<feature type="binding site" evidence="1">
    <location>
        <position position="246"/>
    </location>
    <ligand>
        <name>Mg(2+)</name>
        <dbReference type="ChEBI" id="CHEBI:18420"/>
    </ligand>
</feature>
<feature type="modified residue" description="Phosphoserine" evidence="1">
    <location>
        <position position="102"/>
    </location>
</feature>
<accession>C0ZIM8</accession>
<organism>
    <name type="scientific">Brevibacillus brevis (strain 47 / JCM 6285 / NBRC 100599)</name>
    <dbReference type="NCBI Taxonomy" id="358681"/>
    <lineage>
        <taxon>Bacteria</taxon>
        <taxon>Bacillati</taxon>
        <taxon>Bacillota</taxon>
        <taxon>Bacilli</taxon>
        <taxon>Bacillales</taxon>
        <taxon>Paenibacillaceae</taxon>
        <taxon>Brevibacillus</taxon>
    </lineage>
</organism>
<reference key="1">
    <citation type="submission" date="2005-03" db="EMBL/GenBank/DDBJ databases">
        <title>Brevibacillus brevis strain 47, complete genome.</title>
        <authorList>
            <person name="Hosoyama A."/>
            <person name="Yamada R."/>
            <person name="Hongo Y."/>
            <person name="Terui Y."/>
            <person name="Ankai A."/>
            <person name="Masuyama W."/>
            <person name="Sekiguchi M."/>
            <person name="Takeda T."/>
            <person name="Asano K."/>
            <person name="Ohji S."/>
            <person name="Ichikawa N."/>
            <person name="Narita S."/>
            <person name="Aoki N."/>
            <person name="Miura H."/>
            <person name="Matsushita S."/>
            <person name="Sekigawa T."/>
            <person name="Yamagata H."/>
            <person name="Yoshikawa H."/>
            <person name="Udaka S."/>
            <person name="Tanikawa S."/>
            <person name="Fujita N."/>
        </authorList>
    </citation>
    <scope>NUCLEOTIDE SEQUENCE [LARGE SCALE GENOMIC DNA]</scope>
    <source>
        <strain>47 / JCM 6285 / NBRC 100599</strain>
    </source>
</reference>